<feature type="chain" id="PRO_1000115186" description="Homoserine O-acetyltransferase">
    <location>
        <begin position="1"/>
        <end position="307"/>
    </location>
</feature>
<feature type="active site" description="Acyl-thioester intermediate" evidence="1">
    <location>
        <position position="142"/>
    </location>
</feature>
<feature type="active site" description="Proton acceptor" evidence="1">
    <location>
        <position position="235"/>
    </location>
</feature>
<feature type="active site" evidence="1">
    <location>
        <position position="237"/>
    </location>
</feature>
<feature type="binding site" evidence="1">
    <location>
        <position position="163"/>
    </location>
    <ligand>
        <name>substrate</name>
    </ligand>
</feature>
<feature type="binding site" evidence="1">
    <location>
        <position position="192"/>
    </location>
    <ligand>
        <name>substrate</name>
    </ligand>
</feature>
<feature type="binding site" evidence="1">
    <location>
        <position position="249"/>
    </location>
    <ligand>
        <name>substrate</name>
    </ligand>
</feature>
<feature type="site" description="Important for acyl-CoA specificity" evidence="1">
    <location>
        <position position="111"/>
    </location>
</feature>
<feature type="site" description="Important for substrate specificity" evidence="1">
    <location>
        <position position="192"/>
    </location>
</feature>
<dbReference type="EC" id="2.3.1.31" evidence="1"/>
<dbReference type="EMBL" id="CP001191">
    <property type="protein sequence ID" value="ACI57067.1"/>
    <property type="molecule type" value="Genomic_DNA"/>
</dbReference>
<dbReference type="RefSeq" id="WP_012559304.1">
    <property type="nucleotide sequence ID" value="NC_011369.1"/>
</dbReference>
<dbReference type="SMR" id="B5ZU74"/>
<dbReference type="STRING" id="395492.Rleg2_3805"/>
<dbReference type="KEGG" id="rlt:Rleg2_3805"/>
<dbReference type="eggNOG" id="COG1897">
    <property type="taxonomic scope" value="Bacteria"/>
</dbReference>
<dbReference type="HOGENOM" id="CLU_057851_0_1_5"/>
<dbReference type="UniPathway" id="UPA00051">
    <property type="reaction ID" value="UER00074"/>
</dbReference>
<dbReference type="Proteomes" id="UP000008330">
    <property type="component" value="Chromosome"/>
</dbReference>
<dbReference type="GO" id="GO:0005737">
    <property type="term" value="C:cytoplasm"/>
    <property type="evidence" value="ECO:0007669"/>
    <property type="project" value="UniProtKB-SubCell"/>
</dbReference>
<dbReference type="GO" id="GO:0004414">
    <property type="term" value="F:homoserine O-acetyltransferase activity"/>
    <property type="evidence" value="ECO:0007669"/>
    <property type="project" value="UniProtKB-EC"/>
</dbReference>
<dbReference type="GO" id="GO:0008899">
    <property type="term" value="F:homoserine O-succinyltransferase activity"/>
    <property type="evidence" value="ECO:0007669"/>
    <property type="project" value="UniProtKB-UniRule"/>
</dbReference>
<dbReference type="GO" id="GO:0019281">
    <property type="term" value="P:L-methionine biosynthetic process from homoserine via O-succinyl-L-homoserine and cystathionine"/>
    <property type="evidence" value="ECO:0007669"/>
    <property type="project" value="InterPro"/>
</dbReference>
<dbReference type="CDD" id="cd03131">
    <property type="entry name" value="GATase1_HTS"/>
    <property type="match status" value="1"/>
</dbReference>
<dbReference type="Gene3D" id="3.40.50.880">
    <property type="match status" value="1"/>
</dbReference>
<dbReference type="HAMAP" id="MF_00295">
    <property type="entry name" value="MetA_acyltransf"/>
    <property type="match status" value="1"/>
</dbReference>
<dbReference type="InterPro" id="IPR029062">
    <property type="entry name" value="Class_I_gatase-like"/>
</dbReference>
<dbReference type="InterPro" id="IPR005697">
    <property type="entry name" value="HST_MetA"/>
</dbReference>
<dbReference type="InterPro" id="IPR033752">
    <property type="entry name" value="MetA_family"/>
</dbReference>
<dbReference type="NCBIfam" id="TIGR01001">
    <property type="entry name" value="metA"/>
    <property type="match status" value="1"/>
</dbReference>
<dbReference type="PANTHER" id="PTHR20919">
    <property type="entry name" value="HOMOSERINE O-SUCCINYLTRANSFERASE"/>
    <property type="match status" value="1"/>
</dbReference>
<dbReference type="PANTHER" id="PTHR20919:SF0">
    <property type="entry name" value="HOMOSERINE O-SUCCINYLTRANSFERASE"/>
    <property type="match status" value="1"/>
</dbReference>
<dbReference type="Pfam" id="PF04204">
    <property type="entry name" value="HTS"/>
    <property type="match status" value="1"/>
</dbReference>
<dbReference type="PIRSF" id="PIRSF000450">
    <property type="entry name" value="H_ser_succinyltr"/>
    <property type="match status" value="1"/>
</dbReference>
<dbReference type="SUPFAM" id="SSF52317">
    <property type="entry name" value="Class I glutamine amidotransferase-like"/>
    <property type="match status" value="1"/>
</dbReference>
<name>METAA_RHILW</name>
<accession>B5ZU74</accession>
<comment type="function">
    <text evidence="1">Transfers an acetyl group from acetyl-CoA to L-homoserine, forming acetyl-L-homoserine.</text>
</comment>
<comment type="catalytic activity">
    <reaction evidence="1">
        <text>L-homoserine + acetyl-CoA = O-acetyl-L-homoserine + CoA</text>
        <dbReference type="Rhea" id="RHEA:13701"/>
        <dbReference type="ChEBI" id="CHEBI:57287"/>
        <dbReference type="ChEBI" id="CHEBI:57288"/>
        <dbReference type="ChEBI" id="CHEBI:57476"/>
        <dbReference type="ChEBI" id="CHEBI:57716"/>
        <dbReference type="EC" id="2.3.1.31"/>
    </reaction>
</comment>
<comment type="pathway">
    <text evidence="1">Amino-acid biosynthesis; L-methionine biosynthesis via de novo pathway; O-acetyl-L-homoserine from L-homoserine: step 1/1.</text>
</comment>
<comment type="subcellular location">
    <subcellularLocation>
        <location evidence="1">Cytoplasm</location>
    </subcellularLocation>
</comment>
<comment type="similarity">
    <text evidence="1">Belongs to the MetA family.</text>
</comment>
<gene>
    <name evidence="1" type="primary">metAA</name>
    <name type="ordered locus">Rleg2_3805</name>
</gene>
<keyword id="KW-0012">Acyltransferase</keyword>
<keyword id="KW-0028">Amino-acid biosynthesis</keyword>
<keyword id="KW-0963">Cytoplasm</keyword>
<keyword id="KW-0486">Methionine biosynthesis</keyword>
<keyword id="KW-1185">Reference proteome</keyword>
<keyword id="KW-0808">Transferase</keyword>
<evidence type="ECO:0000255" key="1">
    <source>
        <dbReference type="HAMAP-Rule" id="MF_00295"/>
    </source>
</evidence>
<protein>
    <recommendedName>
        <fullName evidence="1">Homoserine O-acetyltransferase</fullName>
        <shortName evidence="1">HAT</shortName>
        <ecNumber evidence="1">2.3.1.31</ecNumber>
    </recommendedName>
    <alternativeName>
        <fullName evidence="1">Homoserine transacetylase</fullName>
        <shortName evidence="1">HTA</shortName>
    </alternativeName>
</protein>
<organism>
    <name type="scientific">Rhizobium leguminosarum bv. trifolii (strain WSM2304)</name>
    <dbReference type="NCBI Taxonomy" id="395492"/>
    <lineage>
        <taxon>Bacteria</taxon>
        <taxon>Pseudomonadati</taxon>
        <taxon>Pseudomonadota</taxon>
        <taxon>Alphaproteobacteria</taxon>
        <taxon>Hyphomicrobiales</taxon>
        <taxon>Rhizobiaceae</taxon>
        <taxon>Rhizobium/Agrobacterium group</taxon>
        <taxon>Rhizobium</taxon>
    </lineage>
</organism>
<reference key="1">
    <citation type="journal article" date="2010" name="Stand. Genomic Sci.">
        <title>Complete genome sequence of Rhizobium leguminosarum bv trifolii strain WSM2304, an effective microsymbiont of the South American clover Trifolium polymorphum.</title>
        <authorList>
            <person name="Reeve W."/>
            <person name="O'Hara G."/>
            <person name="Chain P."/>
            <person name="Ardley J."/>
            <person name="Brau L."/>
            <person name="Nandesena K."/>
            <person name="Tiwari R."/>
            <person name="Malfatti S."/>
            <person name="Kiss H."/>
            <person name="Lapidus A."/>
            <person name="Copeland A."/>
            <person name="Nolan M."/>
            <person name="Land M."/>
            <person name="Ivanova N."/>
            <person name="Mavromatis K."/>
            <person name="Markowitz V."/>
            <person name="Kyrpides N."/>
            <person name="Melino V."/>
            <person name="Denton M."/>
            <person name="Yates R."/>
            <person name="Howieson J."/>
        </authorList>
    </citation>
    <scope>NUCLEOTIDE SEQUENCE [LARGE SCALE GENOMIC DNA]</scope>
    <source>
        <strain>WSM2304</strain>
    </source>
</reference>
<sequence>MPIKIPDTLPAFETLVQEGVRVMTETLAIRQDIRPLQIGLLNLMPNKIKTELQMARLVGASPLQVELSLIRIGGHKAKNTSEDHLLAFYQTWEEVKHRKFDGFIITGAPIELLPYEDVTYWPEMQEILDWTETNVHSTMNVCWGAMAAIYHFHGVPKYELKEKAFGVYRHRNLKPSSIYLNGFSDNFEVPVSRWTEVRRDDIEKSDELEILMESSEMGVCLVHEKRGRRLYMFNHVEYDSTSLSDEYFRDVNTGVPIKMPHNYFPHNDPALAPQNRWRSHAHLLFGNWINEIYQTTPFDVEEIGMDL</sequence>
<proteinExistence type="inferred from homology"/>